<comment type="function">
    <text evidence="1">One of the primary rRNA binding proteins, it binds directly to 16S rRNA where it nucleates assembly of the head domain of the 30S subunit.</text>
</comment>
<comment type="subunit">
    <text>Part of the 30S ribosomal subunit.</text>
</comment>
<comment type="subcellular location">
    <subcellularLocation>
        <location>Plastid</location>
        <location>Chloroplast</location>
    </subcellularLocation>
</comment>
<comment type="similarity">
    <text evidence="2">Belongs to the universal ribosomal protein uS7 family.</text>
</comment>
<evidence type="ECO:0000250" key="1"/>
<evidence type="ECO:0000305" key="2"/>
<dbReference type="EMBL" id="EF067920">
    <property type="protein sequence ID" value="ABK20703.1"/>
    <property type="molecule type" value="Genomic_DNA"/>
</dbReference>
<dbReference type="RefSeq" id="YP_874480.1">
    <property type="nucleotide sequence ID" value="NC_008588.1"/>
</dbReference>
<dbReference type="SMR" id="A0T0K5"/>
<dbReference type="STRING" id="556484.A0T0K5"/>
<dbReference type="GeneID" id="4524655"/>
<dbReference type="InParanoid" id="A0T0K5"/>
<dbReference type="Proteomes" id="UP000000759">
    <property type="component" value="Chloroplast"/>
</dbReference>
<dbReference type="GO" id="GO:0009507">
    <property type="term" value="C:chloroplast"/>
    <property type="evidence" value="ECO:0007669"/>
    <property type="project" value="UniProtKB-SubCell"/>
</dbReference>
<dbReference type="GO" id="GO:0015935">
    <property type="term" value="C:small ribosomal subunit"/>
    <property type="evidence" value="ECO:0007669"/>
    <property type="project" value="InterPro"/>
</dbReference>
<dbReference type="GO" id="GO:0019843">
    <property type="term" value="F:rRNA binding"/>
    <property type="evidence" value="ECO:0007669"/>
    <property type="project" value="UniProtKB-UniRule"/>
</dbReference>
<dbReference type="GO" id="GO:0003735">
    <property type="term" value="F:structural constituent of ribosome"/>
    <property type="evidence" value="ECO:0007669"/>
    <property type="project" value="InterPro"/>
</dbReference>
<dbReference type="GO" id="GO:0006412">
    <property type="term" value="P:translation"/>
    <property type="evidence" value="ECO:0007669"/>
    <property type="project" value="UniProtKB-UniRule"/>
</dbReference>
<dbReference type="CDD" id="cd14871">
    <property type="entry name" value="uS7_Chloroplast"/>
    <property type="match status" value="1"/>
</dbReference>
<dbReference type="FunFam" id="1.10.455.10:FF:000001">
    <property type="entry name" value="30S ribosomal protein S7"/>
    <property type="match status" value="1"/>
</dbReference>
<dbReference type="Gene3D" id="1.10.455.10">
    <property type="entry name" value="Ribosomal protein S7 domain"/>
    <property type="match status" value="1"/>
</dbReference>
<dbReference type="HAMAP" id="MF_00480_B">
    <property type="entry name" value="Ribosomal_uS7_B"/>
    <property type="match status" value="1"/>
</dbReference>
<dbReference type="InterPro" id="IPR000235">
    <property type="entry name" value="Ribosomal_uS7"/>
</dbReference>
<dbReference type="InterPro" id="IPR005717">
    <property type="entry name" value="Ribosomal_uS7_bac/org-type"/>
</dbReference>
<dbReference type="InterPro" id="IPR020606">
    <property type="entry name" value="Ribosomal_uS7_CS"/>
</dbReference>
<dbReference type="InterPro" id="IPR023798">
    <property type="entry name" value="Ribosomal_uS7_dom"/>
</dbReference>
<dbReference type="InterPro" id="IPR036823">
    <property type="entry name" value="Ribosomal_uS7_dom_sf"/>
</dbReference>
<dbReference type="NCBIfam" id="TIGR01029">
    <property type="entry name" value="rpsG_bact"/>
    <property type="match status" value="1"/>
</dbReference>
<dbReference type="PANTHER" id="PTHR11205">
    <property type="entry name" value="RIBOSOMAL PROTEIN S7"/>
    <property type="match status" value="1"/>
</dbReference>
<dbReference type="Pfam" id="PF00177">
    <property type="entry name" value="Ribosomal_S7"/>
    <property type="match status" value="1"/>
</dbReference>
<dbReference type="PIRSF" id="PIRSF002122">
    <property type="entry name" value="RPS7p_RPS7a_RPS5e_RPS7o"/>
    <property type="match status" value="1"/>
</dbReference>
<dbReference type="SUPFAM" id="SSF47973">
    <property type="entry name" value="Ribosomal protein S7"/>
    <property type="match status" value="1"/>
</dbReference>
<dbReference type="PROSITE" id="PS00052">
    <property type="entry name" value="RIBOSOMAL_S7"/>
    <property type="match status" value="1"/>
</dbReference>
<geneLocation type="chloroplast"/>
<feature type="chain" id="PRO_0000277067" description="Small ribosomal subunit protein uS7c">
    <location>
        <begin position="1"/>
        <end position="156"/>
    </location>
</feature>
<name>RR7_PHATC</name>
<gene>
    <name type="primary">rps7</name>
</gene>
<sequence length="156" mass="17821">MSRRNISKKRFPETDAIYNSYLVSLLISRILKSGKKTIAKKIVYQAFDIIKKKTNEDPLTVFEKAIRNASPIVEVKARRVGGSTYQVPVEVTGFRATNLSLRWIIRYGDQRVGRSMAIKLANEIIDTANDIGNTIKKKEETHKMAEANKAFAHFRY</sequence>
<reference key="1">
    <citation type="journal article" date="2007" name="Mol. Genet. Genomics">
        <title>Chloroplast genomes of the diatoms Phaeodactylum tricornutum and Thalassiosira pseudonana: comparison with other plastid genomes of the red lineage.</title>
        <authorList>
            <person name="Oudot-Le Secq M.-P."/>
            <person name="Grimwood J."/>
            <person name="Shapiro H."/>
            <person name="Armbrust E.V."/>
            <person name="Bowler C."/>
            <person name="Green B.R."/>
        </authorList>
    </citation>
    <scope>NUCLEOTIDE SEQUENCE [LARGE SCALE GENOMIC DNA]</scope>
    <source>
        <strain>CCAP 1055/1</strain>
    </source>
</reference>
<organism>
    <name type="scientific">Phaeodactylum tricornutum (strain CCAP 1055/1)</name>
    <dbReference type="NCBI Taxonomy" id="556484"/>
    <lineage>
        <taxon>Eukaryota</taxon>
        <taxon>Sar</taxon>
        <taxon>Stramenopiles</taxon>
        <taxon>Ochrophyta</taxon>
        <taxon>Bacillariophyta</taxon>
        <taxon>Bacillariophyceae</taxon>
        <taxon>Bacillariophycidae</taxon>
        <taxon>Naviculales</taxon>
        <taxon>Phaeodactylaceae</taxon>
        <taxon>Phaeodactylum</taxon>
    </lineage>
</organism>
<accession>A0T0K5</accession>
<proteinExistence type="inferred from homology"/>
<keyword id="KW-0150">Chloroplast</keyword>
<keyword id="KW-0934">Plastid</keyword>
<keyword id="KW-1185">Reference proteome</keyword>
<keyword id="KW-0687">Ribonucleoprotein</keyword>
<keyword id="KW-0689">Ribosomal protein</keyword>
<keyword id="KW-0694">RNA-binding</keyword>
<keyword id="KW-0699">rRNA-binding</keyword>
<protein>
    <recommendedName>
        <fullName evidence="2">Small ribosomal subunit protein uS7c</fullName>
    </recommendedName>
    <alternativeName>
        <fullName>30S ribosomal protein S7, chloroplastic</fullName>
    </alternativeName>
</protein>